<organism>
    <name type="scientific">Bacillus licheniformis (strain ATCC 14580 / DSM 13 / JCM 2505 / CCUG 7422 / NBRC 12200 / NCIMB 9375 / NCTC 10341 / NRRL NRS-1264 / Gibson 46)</name>
    <dbReference type="NCBI Taxonomy" id="279010"/>
    <lineage>
        <taxon>Bacteria</taxon>
        <taxon>Bacillati</taxon>
        <taxon>Bacillota</taxon>
        <taxon>Bacilli</taxon>
        <taxon>Bacillales</taxon>
        <taxon>Bacillaceae</taxon>
        <taxon>Bacillus</taxon>
    </lineage>
</organism>
<keyword id="KW-0067">ATP-binding</keyword>
<keyword id="KW-0963">Cytoplasm</keyword>
<keyword id="KW-0347">Helicase</keyword>
<keyword id="KW-0378">Hydrolase</keyword>
<keyword id="KW-0547">Nucleotide-binding</keyword>
<keyword id="KW-1185">Reference proteome</keyword>
<keyword id="KW-0694">RNA-binding</keyword>
<keyword id="KW-0346">Stress response</keyword>
<name>CSHA_BACLD</name>
<evidence type="ECO:0000255" key="1">
    <source>
        <dbReference type="HAMAP-Rule" id="MF_01493"/>
    </source>
</evidence>
<evidence type="ECO:0000256" key="2">
    <source>
        <dbReference type="SAM" id="MobiDB-lite"/>
    </source>
</evidence>
<comment type="function">
    <text evidence="1">DEAD-box RNA helicase possibly involved in RNA degradation. Unwinds dsRNA in both 5'- and 3'-directions, has RNA-dependent ATPase activity.</text>
</comment>
<comment type="catalytic activity">
    <reaction evidence="1">
        <text>ATP + H2O = ADP + phosphate + H(+)</text>
        <dbReference type="Rhea" id="RHEA:13065"/>
        <dbReference type="ChEBI" id="CHEBI:15377"/>
        <dbReference type="ChEBI" id="CHEBI:15378"/>
        <dbReference type="ChEBI" id="CHEBI:30616"/>
        <dbReference type="ChEBI" id="CHEBI:43474"/>
        <dbReference type="ChEBI" id="CHEBI:456216"/>
        <dbReference type="EC" id="3.6.4.13"/>
    </reaction>
</comment>
<comment type="subunit">
    <text evidence="1">Oligomerizes, may be a member of the RNA degradosome.</text>
</comment>
<comment type="subcellular location">
    <subcellularLocation>
        <location evidence="1">Cytoplasm</location>
    </subcellularLocation>
</comment>
<comment type="similarity">
    <text evidence="1">Belongs to the DEAD box helicase family. CshA subfamily.</text>
</comment>
<feature type="chain" id="PRO_0000280053" description="DEAD-box ATP-dependent RNA helicase CshA">
    <location>
        <begin position="1"/>
        <end position="487"/>
    </location>
</feature>
<feature type="domain" description="Helicase ATP-binding" evidence="1">
    <location>
        <begin position="34"/>
        <end position="204"/>
    </location>
</feature>
<feature type="domain" description="Helicase C-terminal" evidence="1">
    <location>
        <begin position="215"/>
        <end position="375"/>
    </location>
</feature>
<feature type="region of interest" description="Disordered" evidence="2">
    <location>
        <begin position="428"/>
        <end position="487"/>
    </location>
</feature>
<feature type="short sequence motif" description="Q motif">
    <location>
        <begin position="3"/>
        <end position="31"/>
    </location>
</feature>
<feature type="short sequence motif" description="DEAD box">
    <location>
        <begin position="152"/>
        <end position="155"/>
    </location>
</feature>
<feature type="compositionally biased region" description="Basic and acidic residues" evidence="2">
    <location>
        <begin position="428"/>
        <end position="440"/>
    </location>
</feature>
<feature type="compositionally biased region" description="Basic residues" evidence="2">
    <location>
        <begin position="441"/>
        <end position="454"/>
    </location>
</feature>
<feature type="compositionally biased region" description="Basic and acidic residues" evidence="2">
    <location>
        <begin position="469"/>
        <end position="479"/>
    </location>
</feature>
<feature type="binding site" evidence="1">
    <location>
        <begin position="47"/>
        <end position="54"/>
    </location>
    <ligand>
        <name>ATP</name>
        <dbReference type="ChEBI" id="CHEBI:30616"/>
    </ligand>
</feature>
<reference key="1">
    <citation type="journal article" date="2004" name="J. Mol. Microbiol. Biotechnol.">
        <title>The complete genome sequence of Bacillus licheniformis DSM13, an organism with great industrial potential.</title>
        <authorList>
            <person name="Veith B."/>
            <person name="Herzberg C."/>
            <person name="Steckel S."/>
            <person name="Feesche J."/>
            <person name="Maurer K.H."/>
            <person name="Ehrenreich P."/>
            <person name="Baeumer S."/>
            <person name="Henne A."/>
            <person name="Liesegang H."/>
            <person name="Merkl R."/>
            <person name="Ehrenreich A."/>
            <person name="Gottschalk G."/>
        </authorList>
    </citation>
    <scope>NUCLEOTIDE SEQUENCE [LARGE SCALE GENOMIC DNA]</scope>
    <source>
        <strain>ATCC 14580 / DSM 13 / JCM 2505 / CCUG 7422 / NBRC 12200 / NCIMB 9375 / NCTC 10341 / NRRL NRS-1264 / Gibson 46</strain>
    </source>
</reference>
<reference key="2">
    <citation type="journal article" date="2004" name="Genome Biol.">
        <title>Complete genome sequence of the industrial bacterium Bacillus licheniformis and comparisons with closely related Bacillus species.</title>
        <authorList>
            <person name="Rey M.W."/>
            <person name="Ramaiya P."/>
            <person name="Nelson B.A."/>
            <person name="Brody-Karpin S.D."/>
            <person name="Zaretsky E.J."/>
            <person name="Tang M."/>
            <person name="Lopez de Leon A."/>
            <person name="Xiang H."/>
            <person name="Gusti V."/>
            <person name="Clausen I.G."/>
            <person name="Olsen P.B."/>
            <person name="Rasmussen M.D."/>
            <person name="Andersen J.T."/>
            <person name="Joergensen P.L."/>
            <person name="Larsen T.S."/>
            <person name="Sorokin A."/>
            <person name="Bolotin A."/>
            <person name="Lapidus A."/>
            <person name="Galleron N."/>
            <person name="Ehrlich S.D."/>
            <person name="Berka R.M."/>
        </authorList>
    </citation>
    <scope>NUCLEOTIDE SEQUENCE [LARGE SCALE GENOMIC DNA]</scope>
    <source>
        <strain>ATCC 14580 / DSM 13 / JCM 2505 / CCUG 7422 / NBRC 12200 / NCIMB 9375 / NCTC 10341 / NRRL NRS-1264 / Gibson 46</strain>
    </source>
</reference>
<dbReference type="EC" id="3.6.4.13" evidence="1"/>
<dbReference type="EMBL" id="AE017333">
    <property type="protein sequence ID" value="AAU39502.1"/>
    <property type="molecule type" value="Genomic_DNA"/>
</dbReference>
<dbReference type="EMBL" id="CP000002">
    <property type="protein sequence ID" value="AAU22147.1"/>
    <property type="molecule type" value="Genomic_DNA"/>
</dbReference>
<dbReference type="RefSeq" id="WP_003179112.1">
    <property type="nucleotide sequence ID" value="NC_006322.1"/>
</dbReference>
<dbReference type="SMR" id="Q65N62"/>
<dbReference type="STRING" id="279010.BL02197"/>
<dbReference type="DNASU" id="3098967"/>
<dbReference type="GeneID" id="92858494"/>
<dbReference type="KEGG" id="bld:BLi00546"/>
<dbReference type="KEGG" id="bli:BL02197"/>
<dbReference type="eggNOG" id="COG0513">
    <property type="taxonomic scope" value="Bacteria"/>
</dbReference>
<dbReference type="HOGENOM" id="CLU_003041_21_1_9"/>
<dbReference type="Proteomes" id="UP000000606">
    <property type="component" value="Chromosome"/>
</dbReference>
<dbReference type="GO" id="GO:0043590">
    <property type="term" value="C:bacterial nucleoid"/>
    <property type="evidence" value="ECO:0000250"/>
    <property type="project" value="UniProtKB"/>
</dbReference>
<dbReference type="GO" id="GO:0005829">
    <property type="term" value="C:cytosol"/>
    <property type="evidence" value="ECO:0007669"/>
    <property type="project" value="TreeGrafter"/>
</dbReference>
<dbReference type="GO" id="GO:0005840">
    <property type="term" value="C:ribosome"/>
    <property type="evidence" value="ECO:0007669"/>
    <property type="project" value="TreeGrafter"/>
</dbReference>
<dbReference type="GO" id="GO:0005524">
    <property type="term" value="F:ATP binding"/>
    <property type="evidence" value="ECO:0000250"/>
    <property type="project" value="UniProtKB"/>
</dbReference>
<dbReference type="GO" id="GO:0016887">
    <property type="term" value="F:ATP hydrolysis activity"/>
    <property type="evidence" value="ECO:0007669"/>
    <property type="project" value="RHEA"/>
</dbReference>
<dbReference type="GO" id="GO:0003723">
    <property type="term" value="F:RNA binding"/>
    <property type="evidence" value="ECO:0000250"/>
    <property type="project" value="UniProtKB"/>
</dbReference>
<dbReference type="GO" id="GO:0003724">
    <property type="term" value="F:RNA helicase activity"/>
    <property type="evidence" value="ECO:0000250"/>
    <property type="project" value="UniProtKB"/>
</dbReference>
<dbReference type="GO" id="GO:0033592">
    <property type="term" value="F:RNA strand annealing activity"/>
    <property type="evidence" value="ECO:0007669"/>
    <property type="project" value="TreeGrafter"/>
</dbReference>
<dbReference type="GO" id="GO:0009409">
    <property type="term" value="P:response to cold"/>
    <property type="evidence" value="ECO:0007669"/>
    <property type="project" value="TreeGrafter"/>
</dbReference>
<dbReference type="GO" id="GO:0006401">
    <property type="term" value="P:RNA catabolic process"/>
    <property type="evidence" value="ECO:0007669"/>
    <property type="project" value="UniProtKB-UniRule"/>
</dbReference>
<dbReference type="CDD" id="cd00268">
    <property type="entry name" value="DEADc"/>
    <property type="match status" value="1"/>
</dbReference>
<dbReference type="CDD" id="cd18787">
    <property type="entry name" value="SF2_C_DEAD"/>
    <property type="match status" value="1"/>
</dbReference>
<dbReference type="FunFam" id="3.40.50.300:FF:000108">
    <property type="entry name" value="ATP-dependent RNA helicase RhlE"/>
    <property type="match status" value="1"/>
</dbReference>
<dbReference type="FunFam" id="3.40.50.300:FF:000783">
    <property type="entry name" value="DEAD-box ATP-dependent RNA helicase CshA"/>
    <property type="match status" value="1"/>
</dbReference>
<dbReference type="Gene3D" id="3.40.50.300">
    <property type="entry name" value="P-loop containing nucleotide triphosphate hydrolases"/>
    <property type="match status" value="2"/>
</dbReference>
<dbReference type="HAMAP" id="MF_01493">
    <property type="entry name" value="DEAD_helicase_CshA"/>
    <property type="match status" value="1"/>
</dbReference>
<dbReference type="InterPro" id="IPR011545">
    <property type="entry name" value="DEAD/DEAH_box_helicase_dom"/>
</dbReference>
<dbReference type="InterPro" id="IPR050547">
    <property type="entry name" value="DEAD_box_RNA_helicases"/>
</dbReference>
<dbReference type="InterPro" id="IPR030880">
    <property type="entry name" value="DEAD_helicase_CshA"/>
</dbReference>
<dbReference type="InterPro" id="IPR014001">
    <property type="entry name" value="Helicase_ATP-bd"/>
</dbReference>
<dbReference type="InterPro" id="IPR001650">
    <property type="entry name" value="Helicase_C-like"/>
</dbReference>
<dbReference type="InterPro" id="IPR027417">
    <property type="entry name" value="P-loop_NTPase"/>
</dbReference>
<dbReference type="InterPro" id="IPR000629">
    <property type="entry name" value="RNA-helicase_DEAD-box_CS"/>
</dbReference>
<dbReference type="InterPro" id="IPR014014">
    <property type="entry name" value="RNA_helicase_DEAD_Q_motif"/>
</dbReference>
<dbReference type="PANTHER" id="PTHR47963">
    <property type="entry name" value="DEAD-BOX ATP-DEPENDENT RNA HELICASE 47, MITOCHONDRIAL"/>
    <property type="match status" value="1"/>
</dbReference>
<dbReference type="PANTHER" id="PTHR47963:SF5">
    <property type="entry name" value="DEAD-BOX ATP-DEPENDENT RNA HELICASE CSHA"/>
    <property type="match status" value="1"/>
</dbReference>
<dbReference type="Pfam" id="PF00270">
    <property type="entry name" value="DEAD"/>
    <property type="match status" value="1"/>
</dbReference>
<dbReference type="Pfam" id="PF00271">
    <property type="entry name" value="Helicase_C"/>
    <property type="match status" value="1"/>
</dbReference>
<dbReference type="SMART" id="SM00487">
    <property type="entry name" value="DEXDc"/>
    <property type="match status" value="1"/>
</dbReference>
<dbReference type="SMART" id="SM00490">
    <property type="entry name" value="HELICc"/>
    <property type="match status" value="1"/>
</dbReference>
<dbReference type="SUPFAM" id="SSF52540">
    <property type="entry name" value="P-loop containing nucleoside triphosphate hydrolases"/>
    <property type="match status" value="1"/>
</dbReference>
<dbReference type="PROSITE" id="PS00039">
    <property type="entry name" value="DEAD_ATP_HELICASE"/>
    <property type="match status" value="1"/>
</dbReference>
<dbReference type="PROSITE" id="PS51192">
    <property type="entry name" value="HELICASE_ATP_BIND_1"/>
    <property type="match status" value="1"/>
</dbReference>
<dbReference type="PROSITE" id="PS51194">
    <property type="entry name" value="HELICASE_CTER"/>
    <property type="match status" value="1"/>
</dbReference>
<dbReference type="PROSITE" id="PS51195">
    <property type="entry name" value="Q_MOTIF"/>
    <property type="match status" value="1"/>
</dbReference>
<proteinExistence type="inferred from homology"/>
<sequence length="487" mass="54917">MTITFQDFQLSSDLTKAIKRMGFEEATPIQAQTIPLGLANKDVIGQAQTGTGKTAAFGIPLVEKINPESPNIQAIVIAPTRELAIQVSEELYKIGQDKRARVLPIYGGQDIGRQIRALKKNPHIIVGTPGRLLDHINRRTMRLQTVNTVVLDEADEMLNMGFIEDIESILSNVPAEHQTLLFSATMPAPIKRIAERFMTNPEHVKVKAKEMTVSNIQQFYLEVHERKKFDTLTRLLDIQSPELAIVFGRTKRRVDELTEALNLRGYTAEGIHGDLTQAKRMVALRKFKQGAIEVLVATDVAARGLDISGVTHVYNFDVPQDPESYVHRIGRTGRAGKTGMAMTFITPREKDMLRAIEQTTKRKMDRMKAPTLDEAIEGQQQVTVDRIRTIIEENNLNFYMTAAAELLEDHDSVTVVAAAIKMMTKEPDNTPVRLTEEAPLRTKRNKNHHHRSSKRRDGGGYRGKNNRSSYDKKRSSNDRRQKKSYNS</sequence>
<gene>
    <name evidence="1" type="primary">cshA</name>
    <name type="ordered locus">BLi00546</name>
    <name type="ordered locus">BL02197</name>
</gene>
<accession>Q65N62</accession>
<accession>Q62YL1</accession>
<protein>
    <recommendedName>
        <fullName evidence="1">DEAD-box ATP-dependent RNA helicase CshA</fullName>
        <ecNumber evidence="1">3.6.4.13</ecNumber>
    </recommendedName>
</protein>